<evidence type="ECO:0000255" key="1">
    <source>
        <dbReference type="HAMAP-Rule" id="MF_00379"/>
    </source>
</evidence>
<gene>
    <name evidence="1" type="primary">mnmE</name>
    <name evidence="1" type="synonym">trmE</name>
    <name type="ordered locus">HSM_2017</name>
</gene>
<organism>
    <name type="scientific">Histophilus somni (strain 2336)</name>
    <name type="common">Haemophilus somnus</name>
    <dbReference type="NCBI Taxonomy" id="228400"/>
    <lineage>
        <taxon>Bacteria</taxon>
        <taxon>Pseudomonadati</taxon>
        <taxon>Pseudomonadota</taxon>
        <taxon>Gammaproteobacteria</taxon>
        <taxon>Pasteurellales</taxon>
        <taxon>Pasteurellaceae</taxon>
        <taxon>Histophilus</taxon>
    </lineage>
</organism>
<reference key="1">
    <citation type="submission" date="2008-02" db="EMBL/GenBank/DDBJ databases">
        <title>Complete sequence of Haemophilus somnus 2336.</title>
        <authorList>
            <consortium name="US DOE Joint Genome Institute"/>
            <person name="Siddaramappa S."/>
            <person name="Duncan A.J."/>
            <person name="Challacombe J.F."/>
            <person name="Rainey D."/>
            <person name="Gillaspy A.F."/>
            <person name="Carson M."/>
            <person name="Gipson J."/>
            <person name="Gipson M."/>
            <person name="Bruce D."/>
            <person name="Detter J.C."/>
            <person name="Han C.S."/>
            <person name="Land M."/>
            <person name="Tapia R."/>
            <person name="Thompson L.S."/>
            <person name="Orvis J."/>
            <person name="Zaitshik J."/>
            <person name="Barnes G."/>
            <person name="Brettin T.S."/>
            <person name="Dyer D.W."/>
            <person name="Inzana T.J."/>
        </authorList>
    </citation>
    <scope>NUCLEOTIDE SEQUENCE [LARGE SCALE GENOMIC DNA]</scope>
    <source>
        <strain>2336</strain>
    </source>
</reference>
<name>MNME_HISS2</name>
<proteinExistence type="inferred from homology"/>
<feature type="chain" id="PRO_0000345796" description="tRNA modification GTPase MnmE">
    <location>
        <begin position="1"/>
        <end position="452"/>
    </location>
</feature>
<feature type="domain" description="TrmE-type G">
    <location>
        <begin position="215"/>
        <end position="375"/>
    </location>
</feature>
<feature type="binding site" evidence="1">
    <location>
        <position position="22"/>
    </location>
    <ligand>
        <name>(6S)-5-formyl-5,6,7,8-tetrahydrofolate</name>
        <dbReference type="ChEBI" id="CHEBI:57457"/>
    </ligand>
</feature>
<feature type="binding site" evidence="1">
    <location>
        <position position="79"/>
    </location>
    <ligand>
        <name>(6S)-5-formyl-5,6,7,8-tetrahydrofolate</name>
        <dbReference type="ChEBI" id="CHEBI:57457"/>
    </ligand>
</feature>
<feature type="binding site" evidence="1">
    <location>
        <position position="119"/>
    </location>
    <ligand>
        <name>(6S)-5-formyl-5,6,7,8-tetrahydrofolate</name>
        <dbReference type="ChEBI" id="CHEBI:57457"/>
    </ligand>
</feature>
<feature type="binding site" evidence="1">
    <location>
        <begin position="225"/>
        <end position="230"/>
    </location>
    <ligand>
        <name>GTP</name>
        <dbReference type="ChEBI" id="CHEBI:37565"/>
    </ligand>
</feature>
<feature type="binding site" evidence="1">
    <location>
        <position position="225"/>
    </location>
    <ligand>
        <name>K(+)</name>
        <dbReference type="ChEBI" id="CHEBI:29103"/>
    </ligand>
</feature>
<feature type="binding site" evidence="1">
    <location>
        <position position="229"/>
    </location>
    <ligand>
        <name>Mg(2+)</name>
        <dbReference type="ChEBI" id="CHEBI:18420"/>
    </ligand>
</feature>
<feature type="binding site" evidence="1">
    <location>
        <begin position="244"/>
        <end position="250"/>
    </location>
    <ligand>
        <name>GTP</name>
        <dbReference type="ChEBI" id="CHEBI:37565"/>
    </ligand>
</feature>
<feature type="binding site" evidence="1">
    <location>
        <position position="244"/>
    </location>
    <ligand>
        <name>K(+)</name>
        <dbReference type="ChEBI" id="CHEBI:29103"/>
    </ligand>
</feature>
<feature type="binding site" evidence="1">
    <location>
        <position position="246"/>
    </location>
    <ligand>
        <name>K(+)</name>
        <dbReference type="ChEBI" id="CHEBI:29103"/>
    </ligand>
</feature>
<feature type="binding site" evidence="1">
    <location>
        <position position="249"/>
    </location>
    <ligand>
        <name>K(+)</name>
        <dbReference type="ChEBI" id="CHEBI:29103"/>
    </ligand>
</feature>
<feature type="binding site" evidence="1">
    <location>
        <position position="250"/>
    </location>
    <ligand>
        <name>Mg(2+)</name>
        <dbReference type="ChEBI" id="CHEBI:18420"/>
    </ligand>
</feature>
<feature type="binding site" evidence="1">
    <location>
        <begin position="269"/>
        <end position="272"/>
    </location>
    <ligand>
        <name>GTP</name>
        <dbReference type="ChEBI" id="CHEBI:37565"/>
    </ligand>
</feature>
<feature type="binding site" evidence="1">
    <location>
        <begin position="333"/>
        <end position="336"/>
    </location>
    <ligand>
        <name>GTP</name>
        <dbReference type="ChEBI" id="CHEBI:37565"/>
    </ligand>
</feature>
<feature type="binding site" evidence="1">
    <location>
        <position position="452"/>
    </location>
    <ligand>
        <name>(6S)-5-formyl-5,6,7,8-tetrahydrofolate</name>
        <dbReference type="ChEBI" id="CHEBI:57457"/>
    </ligand>
</feature>
<accession>B0URU2</accession>
<keyword id="KW-0963">Cytoplasm</keyword>
<keyword id="KW-0342">GTP-binding</keyword>
<keyword id="KW-0378">Hydrolase</keyword>
<keyword id="KW-0460">Magnesium</keyword>
<keyword id="KW-0479">Metal-binding</keyword>
<keyword id="KW-0547">Nucleotide-binding</keyword>
<keyword id="KW-0630">Potassium</keyword>
<keyword id="KW-0819">tRNA processing</keyword>
<sequence length="452" mass="49546">MSRDTIVAQATPIGRGGVGILRVSGPLAQQVAEQVLGKTLTPRMANYLPFKDSDGSVLDQGIALYFKAPNSFTGENVLELQGHGGQIVMDLLLKRILQIDGIRLARPGEFSEQAFLNDKLDLAQAEAIADLIEASSEQAARSALKSLQGEFSNKINELVDSVIYLRTYVEAAIDFPDEEIDFLADGKIETHLREIIAKLAKVKNEAKQGAILREGMKVVIAGRPNAGKSSLLNTLAGREAAIVTDIAGTTRDVLREHIHIDGMPLHIIDTAGLRDATDEVEKIGIRRAWDEIEQADRILLILDSTENQVELDLVRSEFMAKLPPHIPLTIVRNKADLSGEAEVLNEQNGLTVISLSAKTQKGVDLLRQHLKQSMGYQVCTEGGFLARRRHLEALEQADIHLQAGLIQLTEFYAGELVAEELRIVQHHLSEITGQFTSDDLLGNIFSSFCIGK</sequence>
<comment type="function">
    <text evidence="1">Exhibits a very high intrinsic GTPase hydrolysis rate. Involved in the addition of a carboxymethylaminomethyl (cmnm) group at the wobble position (U34) of certain tRNAs, forming tRNA-cmnm(5)s(2)U34.</text>
</comment>
<comment type="cofactor">
    <cofactor evidence="1">
        <name>K(+)</name>
        <dbReference type="ChEBI" id="CHEBI:29103"/>
    </cofactor>
    <text evidence="1">Binds 1 potassium ion per subunit.</text>
</comment>
<comment type="subunit">
    <text evidence="1">Homodimer. Heterotetramer of two MnmE and two MnmG subunits.</text>
</comment>
<comment type="subcellular location">
    <subcellularLocation>
        <location evidence="1">Cytoplasm</location>
    </subcellularLocation>
</comment>
<comment type="similarity">
    <text evidence="1">Belongs to the TRAFAC class TrmE-Era-EngA-EngB-Septin-like GTPase superfamily. TrmE GTPase family.</text>
</comment>
<protein>
    <recommendedName>
        <fullName evidence="1">tRNA modification GTPase MnmE</fullName>
        <ecNumber evidence="1">3.6.-.-</ecNumber>
    </recommendedName>
</protein>
<dbReference type="EC" id="3.6.-.-" evidence="1"/>
<dbReference type="EMBL" id="CP000947">
    <property type="protein sequence ID" value="ACA31819.1"/>
    <property type="molecule type" value="Genomic_DNA"/>
</dbReference>
<dbReference type="RefSeq" id="WP_012341072.1">
    <property type="nucleotide sequence ID" value="NC_010519.1"/>
</dbReference>
<dbReference type="SMR" id="B0URU2"/>
<dbReference type="STRING" id="228400.HSM_2017"/>
<dbReference type="GeneID" id="31488328"/>
<dbReference type="KEGG" id="hsm:HSM_2017"/>
<dbReference type="HOGENOM" id="CLU_019624_4_1_6"/>
<dbReference type="GO" id="GO:0005829">
    <property type="term" value="C:cytosol"/>
    <property type="evidence" value="ECO:0007669"/>
    <property type="project" value="TreeGrafter"/>
</dbReference>
<dbReference type="GO" id="GO:0005525">
    <property type="term" value="F:GTP binding"/>
    <property type="evidence" value="ECO:0007669"/>
    <property type="project" value="UniProtKB-UniRule"/>
</dbReference>
<dbReference type="GO" id="GO:0003924">
    <property type="term" value="F:GTPase activity"/>
    <property type="evidence" value="ECO:0007669"/>
    <property type="project" value="UniProtKB-UniRule"/>
</dbReference>
<dbReference type="GO" id="GO:0046872">
    <property type="term" value="F:metal ion binding"/>
    <property type="evidence" value="ECO:0007669"/>
    <property type="project" value="UniProtKB-KW"/>
</dbReference>
<dbReference type="GO" id="GO:0030488">
    <property type="term" value="P:tRNA methylation"/>
    <property type="evidence" value="ECO:0007669"/>
    <property type="project" value="TreeGrafter"/>
</dbReference>
<dbReference type="GO" id="GO:0002098">
    <property type="term" value="P:tRNA wobble uridine modification"/>
    <property type="evidence" value="ECO:0007669"/>
    <property type="project" value="TreeGrafter"/>
</dbReference>
<dbReference type="CDD" id="cd04164">
    <property type="entry name" value="trmE"/>
    <property type="match status" value="1"/>
</dbReference>
<dbReference type="CDD" id="cd14858">
    <property type="entry name" value="TrmE_N"/>
    <property type="match status" value="1"/>
</dbReference>
<dbReference type="FunFam" id="3.30.1360.120:FF:000001">
    <property type="entry name" value="tRNA modification GTPase MnmE"/>
    <property type="match status" value="1"/>
</dbReference>
<dbReference type="FunFam" id="3.40.50.300:FF:000249">
    <property type="entry name" value="tRNA modification GTPase MnmE"/>
    <property type="match status" value="1"/>
</dbReference>
<dbReference type="Gene3D" id="3.40.50.300">
    <property type="entry name" value="P-loop containing nucleotide triphosphate hydrolases"/>
    <property type="match status" value="1"/>
</dbReference>
<dbReference type="Gene3D" id="3.30.1360.120">
    <property type="entry name" value="Probable tRNA modification gtpase trme, domain 1"/>
    <property type="match status" value="1"/>
</dbReference>
<dbReference type="Gene3D" id="1.20.120.430">
    <property type="entry name" value="tRNA modification GTPase MnmE domain 2"/>
    <property type="match status" value="1"/>
</dbReference>
<dbReference type="HAMAP" id="MF_00379">
    <property type="entry name" value="GTPase_MnmE"/>
    <property type="match status" value="1"/>
</dbReference>
<dbReference type="InterPro" id="IPR031168">
    <property type="entry name" value="G_TrmE"/>
</dbReference>
<dbReference type="InterPro" id="IPR006073">
    <property type="entry name" value="GTP-bd"/>
</dbReference>
<dbReference type="InterPro" id="IPR018948">
    <property type="entry name" value="GTP-bd_TrmE_N"/>
</dbReference>
<dbReference type="InterPro" id="IPR004520">
    <property type="entry name" value="GTPase_MnmE"/>
</dbReference>
<dbReference type="InterPro" id="IPR027368">
    <property type="entry name" value="MnmE_dom2"/>
</dbReference>
<dbReference type="InterPro" id="IPR025867">
    <property type="entry name" value="MnmE_helical"/>
</dbReference>
<dbReference type="InterPro" id="IPR027417">
    <property type="entry name" value="P-loop_NTPase"/>
</dbReference>
<dbReference type="InterPro" id="IPR005225">
    <property type="entry name" value="Small_GTP-bd"/>
</dbReference>
<dbReference type="InterPro" id="IPR027266">
    <property type="entry name" value="TrmE/GcvT_dom1"/>
</dbReference>
<dbReference type="NCBIfam" id="TIGR00450">
    <property type="entry name" value="mnmE_trmE_thdF"/>
    <property type="match status" value="1"/>
</dbReference>
<dbReference type="NCBIfam" id="NF003661">
    <property type="entry name" value="PRK05291.1-3"/>
    <property type="match status" value="1"/>
</dbReference>
<dbReference type="NCBIfam" id="TIGR00231">
    <property type="entry name" value="small_GTP"/>
    <property type="match status" value="1"/>
</dbReference>
<dbReference type="PANTHER" id="PTHR42714">
    <property type="entry name" value="TRNA MODIFICATION GTPASE GTPBP3"/>
    <property type="match status" value="1"/>
</dbReference>
<dbReference type="PANTHER" id="PTHR42714:SF2">
    <property type="entry name" value="TRNA MODIFICATION GTPASE GTPBP3, MITOCHONDRIAL"/>
    <property type="match status" value="1"/>
</dbReference>
<dbReference type="Pfam" id="PF01926">
    <property type="entry name" value="MMR_HSR1"/>
    <property type="match status" value="1"/>
</dbReference>
<dbReference type="Pfam" id="PF12631">
    <property type="entry name" value="MnmE_helical"/>
    <property type="match status" value="1"/>
</dbReference>
<dbReference type="Pfam" id="PF10396">
    <property type="entry name" value="TrmE_N"/>
    <property type="match status" value="1"/>
</dbReference>
<dbReference type="SUPFAM" id="SSF52540">
    <property type="entry name" value="P-loop containing nucleoside triphosphate hydrolases"/>
    <property type="match status" value="1"/>
</dbReference>
<dbReference type="SUPFAM" id="SSF116878">
    <property type="entry name" value="TrmE connector domain"/>
    <property type="match status" value="1"/>
</dbReference>
<dbReference type="PROSITE" id="PS51709">
    <property type="entry name" value="G_TRME"/>
    <property type="match status" value="1"/>
</dbReference>